<evidence type="ECO:0000250" key="1"/>
<evidence type="ECO:0000255" key="2">
    <source>
        <dbReference type="PROSITE-ProRule" id="PRU00127"/>
    </source>
</evidence>
<evidence type="ECO:0000256" key="3">
    <source>
        <dbReference type="SAM" id="MobiDB-lite"/>
    </source>
</evidence>
<sequence>MAEGSYRKESEGYNVEDMDEGSDEVGEEDMVEGNDYEEFGAFGGYGALTSFDIRILRAFGSLGPGFRILANEPWELENPVLARTLLEAFRMDPETLANETAARAANVARAAASNQAARAAATAARATYNQVVTNHHPVATHQASGGDTQPMTSAAQAPAATPETSVASPHSSRMLVNSEMAAPGAPARSPQPQTSSQAQEAAAEGPSTACAFPQASRASEMDATRPKTAFLGQNDAFDFSQPAGVSGMAFPRPKRPAPAQEAATEGPSVASRGTQAASAGEGAATRPKTTKSGKALAKTRWVEPQNVVAAAAAKAKMATSIPEPESAAATSQQSAEPWARMGGKRTKKSKHLDDEYESGEEEREPPAVPPTWRASQPLLTTARPQVAPRPSMALRSQVPSRHVLCLPPRNVTLLQERANKLVKYLMIKDYKKIPIKRSDMLKDVIREYDEHFPEIIERATYTLEKKFGIHLKEIDKEEHLYILVCTRDSSARLLGKTKDTPRLSLLLVILGVIFMNGNRASEAVLWEALRKMGLRPGVRHPFLGDLRKLITEDFVKQKYLEYKKVPNSSPPEYEFLWGLRACHETSKMRVLRFIAQYQNRDPREWRAHFLEAVDDAFKTMDVDMAEEHARAQMRAQMNIGEEALIGRWSWDDIQVELLTWDEDGDFGDAWSRIPFAFWARYHQYILNSNRPNRRGTWRAGVSSGTNGAASASMLDGPSTSSTIRTRNAARTSASFFSWIQ</sequence>
<dbReference type="EMBL" id="BC147977">
    <property type="protein sequence ID" value="AAI47978.1"/>
    <property type="molecule type" value="mRNA"/>
</dbReference>
<dbReference type="RefSeq" id="NP_001096781.1">
    <property type="nucleotide sequence ID" value="NM_001103311.1"/>
</dbReference>
<dbReference type="SMR" id="A6QLI5"/>
<dbReference type="FunCoup" id="A6QLI5">
    <property type="interactions" value="59"/>
</dbReference>
<dbReference type="STRING" id="9913.ENSBTAP00000054178"/>
<dbReference type="PaxDb" id="9913-ENSBTAP00000054178"/>
<dbReference type="GeneID" id="100125231"/>
<dbReference type="KEGG" id="bta:100125231"/>
<dbReference type="CTD" id="81557"/>
<dbReference type="eggNOG" id="KOG4562">
    <property type="taxonomic scope" value="Eukaryota"/>
</dbReference>
<dbReference type="InParanoid" id="A6QLI5"/>
<dbReference type="OrthoDB" id="205198at2759"/>
<dbReference type="Proteomes" id="UP000009136">
    <property type="component" value="Unplaced"/>
</dbReference>
<dbReference type="GO" id="GO:0005634">
    <property type="term" value="C:nucleus"/>
    <property type="evidence" value="ECO:0000318"/>
    <property type="project" value="GO_Central"/>
</dbReference>
<dbReference type="GO" id="GO:0000122">
    <property type="term" value="P:negative regulation of transcription by RNA polymerase II"/>
    <property type="evidence" value="ECO:0000318"/>
    <property type="project" value="GO_Central"/>
</dbReference>
<dbReference type="FunFam" id="1.10.10.1200:FF:000001">
    <property type="entry name" value="Melanoma-associated antigen D1"/>
    <property type="match status" value="1"/>
</dbReference>
<dbReference type="FunFam" id="1.10.10.1210:FF:000001">
    <property type="entry name" value="melanoma-associated antigen D1"/>
    <property type="match status" value="1"/>
</dbReference>
<dbReference type="Gene3D" id="1.10.10.1200">
    <property type="entry name" value="MAGE homology domain, winged helix WH1 motif"/>
    <property type="match status" value="1"/>
</dbReference>
<dbReference type="Gene3D" id="1.10.10.1210">
    <property type="entry name" value="MAGE homology domain, winged helix WH2 motif"/>
    <property type="match status" value="1"/>
</dbReference>
<dbReference type="InterPro" id="IPR037445">
    <property type="entry name" value="MAGE"/>
</dbReference>
<dbReference type="InterPro" id="IPR041898">
    <property type="entry name" value="MAGE_WH1"/>
</dbReference>
<dbReference type="InterPro" id="IPR041899">
    <property type="entry name" value="MAGE_WH2"/>
</dbReference>
<dbReference type="InterPro" id="IPR002190">
    <property type="entry name" value="MHD_dom"/>
</dbReference>
<dbReference type="PANTHER" id="PTHR11736:SF37">
    <property type="entry name" value="MELANOMA-ASSOCIATED ANTIGEN D4"/>
    <property type="match status" value="1"/>
</dbReference>
<dbReference type="PANTHER" id="PTHR11736">
    <property type="entry name" value="MELANOMA-ASSOCIATED ANTIGEN MAGE ANTIGEN"/>
    <property type="match status" value="1"/>
</dbReference>
<dbReference type="Pfam" id="PF01454">
    <property type="entry name" value="MAGE"/>
    <property type="match status" value="1"/>
</dbReference>
<dbReference type="SMART" id="SM01373">
    <property type="entry name" value="MAGE"/>
    <property type="match status" value="1"/>
</dbReference>
<dbReference type="PROSITE" id="PS50838">
    <property type="entry name" value="MAGE"/>
    <property type="match status" value="1"/>
</dbReference>
<name>MAGD4_BOVIN</name>
<comment type="function">
    <text evidence="1">May enhance ubiquitin ligase activity of RING-type zinc finger-containing E3 ubiquitin-protein ligases. Proposed to act through recruitment and/or stabilization of the Ubl-conjugating enzyme (E2) at the E3:substrate complex (By similarity).</text>
</comment>
<comment type="subunit">
    <text evidence="1">Interacts with TRIM27.</text>
</comment>
<keyword id="KW-1185">Reference proteome</keyword>
<keyword id="KW-0825">Tumor antigen</keyword>
<keyword id="KW-0833">Ubl conjugation pathway</keyword>
<protein>
    <recommendedName>
        <fullName>Melanoma-associated antigen D4</fullName>
    </recommendedName>
    <alternativeName>
        <fullName>MAGE-D4 antigen</fullName>
    </alternativeName>
</protein>
<feature type="chain" id="PRO_0000346787" description="Melanoma-associated antigen D4">
    <location>
        <begin position="1"/>
        <end position="740"/>
    </location>
</feature>
<feature type="domain" description="MAGE" evidence="2">
    <location>
        <begin position="414"/>
        <end position="612"/>
    </location>
</feature>
<feature type="region of interest" description="Disordered" evidence="3">
    <location>
        <begin position="1"/>
        <end position="27"/>
    </location>
</feature>
<feature type="region of interest" description="Disordered" evidence="3">
    <location>
        <begin position="139"/>
        <end position="208"/>
    </location>
</feature>
<feature type="region of interest" description="Disordered" evidence="3">
    <location>
        <begin position="242"/>
        <end position="298"/>
    </location>
</feature>
<feature type="region of interest" description="Disordered" evidence="3">
    <location>
        <begin position="321"/>
        <end position="377"/>
    </location>
</feature>
<feature type="region of interest" description="Disordered" evidence="3">
    <location>
        <begin position="697"/>
        <end position="722"/>
    </location>
</feature>
<feature type="compositionally biased region" description="Basic and acidic residues" evidence="3">
    <location>
        <begin position="1"/>
        <end position="11"/>
    </location>
</feature>
<feature type="compositionally biased region" description="Acidic residues" evidence="3">
    <location>
        <begin position="14"/>
        <end position="27"/>
    </location>
</feature>
<feature type="compositionally biased region" description="Polar residues" evidence="3">
    <location>
        <begin position="141"/>
        <end position="155"/>
    </location>
</feature>
<feature type="compositionally biased region" description="Polar residues" evidence="3">
    <location>
        <begin position="162"/>
        <end position="175"/>
    </location>
</feature>
<feature type="compositionally biased region" description="Low complexity" evidence="3">
    <location>
        <begin position="185"/>
        <end position="207"/>
    </location>
</feature>
<feature type="compositionally biased region" description="Low complexity" evidence="3">
    <location>
        <begin position="321"/>
        <end position="337"/>
    </location>
</feature>
<feature type="compositionally biased region" description="Acidic residues" evidence="3">
    <location>
        <begin position="354"/>
        <end position="363"/>
    </location>
</feature>
<proteinExistence type="evidence at transcript level"/>
<accession>A6QLI5</accession>
<reference key="1">
    <citation type="submission" date="2007-06" db="EMBL/GenBank/DDBJ databases">
        <authorList>
            <consortium name="NIH - Mammalian Gene Collection (MGC) project"/>
        </authorList>
    </citation>
    <scope>NUCLEOTIDE SEQUENCE [LARGE SCALE MRNA]</scope>
    <source>
        <strain>Hereford</strain>
        <tissue>Brain cortex</tissue>
    </source>
</reference>
<organism>
    <name type="scientific">Bos taurus</name>
    <name type="common">Bovine</name>
    <dbReference type="NCBI Taxonomy" id="9913"/>
    <lineage>
        <taxon>Eukaryota</taxon>
        <taxon>Metazoa</taxon>
        <taxon>Chordata</taxon>
        <taxon>Craniata</taxon>
        <taxon>Vertebrata</taxon>
        <taxon>Euteleostomi</taxon>
        <taxon>Mammalia</taxon>
        <taxon>Eutheria</taxon>
        <taxon>Laurasiatheria</taxon>
        <taxon>Artiodactyla</taxon>
        <taxon>Ruminantia</taxon>
        <taxon>Pecora</taxon>
        <taxon>Bovidae</taxon>
        <taxon>Bovinae</taxon>
        <taxon>Bos</taxon>
    </lineage>
</organism>
<gene>
    <name type="primary">MAGED4</name>
</gene>